<keyword id="KW-1003">Cell membrane</keyword>
<keyword id="KW-0175">Coiled coil</keyword>
<keyword id="KW-0472">Membrane</keyword>
<keyword id="KW-1185">Reference proteome</keyword>
<keyword id="KW-0732">Signal</keyword>
<keyword id="KW-0812">Transmembrane</keyword>
<keyword id="KW-1133">Transmembrane helix</keyword>
<organism>
    <name type="scientific">Rattus norvegicus</name>
    <name type="common">Rat</name>
    <dbReference type="NCBI Taxonomy" id="10116"/>
    <lineage>
        <taxon>Eukaryota</taxon>
        <taxon>Metazoa</taxon>
        <taxon>Chordata</taxon>
        <taxon>Craniata</taxon>
        <taxon>Vertebrata</taxon>
        <taxon>Euteleostomi</taxon>
        <taxon>Mammalia</taxon>
        <taxon>Eutheria</taxon>
        <taxon>Euarchontoglires</taxon>
        <taxon>Glires</taxon>
        <taxon>Rodentia</taxon>
        <taxon>Myomorpha</taxon>
        <taxon>Muroidea</taxon>
        <taxon>Muridae</taxon>
        <taxon>Murinae</taxon>
        <taxon>Rattus</taxon>
    </lineage>
</organism>
<dbReference type="EMBL" id="BC082013">
    <property type="protein sequence ID" value="AAH82013.1"/>
    <property type="molecule type" value="mRNA"/>
</dbReference>
<dbReference type="RefSeq" id="NP_001020214.1">
    <property type="nucleotide sequence ID" value="NM_001025043.1"/>
</dbReference>
<dbReference type="FunCoup" id="Q66H52">
    <property type="interactions" value="92"/>
</dbReference>
<dbReference type="STRING" id="10116.ENSRNOP00000016172"/>
<dbReference type="PhosphoSitePlus" id="Q66H52"/>
<dbReference type="PaxDb" id="10116-ENSRNOP00000016172"/>
<dbReference type="Ensembl" id="ENSRNOT00000110996.1">
    <property type="protein sequence ID" value="ENSRNOP00000079259.1"/>
    <property type="gene ID" value="ENSRNOG00000012151.6"/>
</dbReference>
<dbReference type="Ensembl" id="ENSRNOT00000113642.1">
    <property type="protein sequence ID" value="ENSRNOP00000077758.1"/>
    <property type="gene ID" value="ENSRNOG00000012151.6"/>
</dbReference>
<dbReference type="GeneID" id="499885"/>
<dbReference type="KEGG" id="rno:499885"/>
<dbReference type="UCSC" id="RGD:1564158">
    <property type="organism name" value="rat"/>
</dbReference>
<dbReference type="AGR" id="RGD:1564158"/>
<dbReference type="CTD" id="150771"/>
<dbReference type="RGD" id="1564158">
    <property type="gene designation" value="Itpripl1"/>
</dbReference>
<dbReference type="eggNOG" id="ENOG502RX8U">
    <property type="taxonomic scope" value="Eukaryota"/>
</dbReference>
<dbReference type="GeneTree" id="ENSGT01050000244827"/>
<dbReference type="HOGENOM" id="CLU_025485_2_0_1"/>
<dbReference type="InParanoid" id="Q66H52"/>
<dbReference type="OMA" id="TSVHWPE"/>
<dbReference type="PhylomeDB" id="Q66H52"/>
<dbReference type="TreeFam" id="TF332277"/>
<dbReference type="PRO" id="PR:Q66H52"/>
<dbReference type="Proteomes" id="UP000002494">
    <property type="component" value="Chromosome 3"/>
</dbReference>
<dbReference type="Bgee" id="ENSRNOG00000012151">
    <property type="expression patterns" value="Expressed in testis and 18 other cell types or tissues"/>
</dbReference>
<dbReference type="GO" id="GO:0016020">
    <property type="term" value="C:membrane"/>
    <property type="evidence" value="ECO:0000318"/>
    <property type="project" value="GO_Central"/>
</dbReference>
<dbReference type="GO" id="GO:0005886">
    <property type="term" value="C:plasma membrane"/>
    <property type="evidence" value="ECO:0000266"/>
    <property type="project" value="RGD"/>
</dbReference>
<dbReference type="GO" id="GO:0048018">
    <property type="term" value="F:receptor ligand activity"/>
    <property type="evidence" value="ECO:0000266"/>
    <property type="project" value="RGD"/>
</dbReference>
<dbReference type="GO" id="GO:0050860">
    <property type="term" value="P:negative regulation of T cell receptor signaling pathway"/>
    <property type="evidence" value="ECO:0000266"/>
    <property type="project" value="RGD"/>
</dbReference>
<dbReference type="FunFam" id="1.10.1410.40:FF:000006">
    <property type="entry name" value="Inositol 1,4,5-trisphosphate receptor-interacting protein"/>
    <property type="match status" value="1"/>
</dbReference>
<dbReference type="Gene3D" id="1.10.1410.40">
    <property type="match status" value="1"/>
</dbReference>
<dbReference type="InterPro" id="IPR026250">
    <property type="entry name" value="ITPRIP-like"/>
</dbReference>
<dbReference type="InterPro" id="IPR046906">
    <property type="entry name" value="Mab-21_HhH/H2TH-like"/>
</dbReference>
<dbReference type="InterPro" id="IPR024810">
    <property type="entry name" value="MAB21L/cGLR"/>
</dbReference>
<dbReference type="PANTHER" id="PTHR10656">
    <property type="entry name" value="CELL FATE DETERMINING PROTEIN MAB21-RELATED"/>
    <property type="match status" value="1"/>
</dbReference>
<dbReference type="PANTHER" id="PTHR10656:SF40">
    <property type="entry name" value="INOSITOL 1,4,5-TRISPHOSPHATE RECEPTOR-INTERACTING PROTEIN-LIKE 1"/>
    <property type="match status" value="1"/>
</dbReference>
<dbReference type="Pfam" id="PF20266">
    <property type="entry name" value="Mab-21_C"/>
    <property type="match status" value="1"/>
</dbReference>
<dbReference type="PRINTS" id="PR02107">
    <property type="entry name" value="INOS145TPRIP"/>
</dbReference>
<dbReference type="SMART" id="SM01265">
    <property type="entry name" value="Mab-21"/>
    <property type="match status" value="1"/>
</dbReference>
<accession>Q66H52</accession>
<proteinExistence type="evidence at transcript level"/>
<feature type="signal peptide" evidence="2">
    <location>
        <begin position="1"/>
        <end position="16"/>
    </location>
</feature>
<feature type="chain" id="PRO_0000320568" description="Inositol 1,4,5-trisphosphate receptor-interacting protein-like 1">
    <location>
        <begin position="17"/>
        <end position="547"/>
    </location>
</feature>
<feature type="topological domain" description="Extracellular" evidence="2">
    <location>
        <begin position="17"/>
        <end position="96"/>
    </location>
</feature>
<feature type="transmembrane region" description="Helical" evidence="2">
    <location>
        <begin position="97"/>
        <end position="117"/>
    </location>
</feature>
<feature type="topological domain" description="Cytoplasmic" evidence="2">
    <location>
        <begin position="118"/>
        <end position="547"/>
    </location>
</feature>
<feature type="coiled-coil region" evidence="2">
    <location>
        <begin position="28"/>
        <end position="66"/>
    </location>
</feature>
<gene>
    <name type="primary">Itpripl1</name>
</gene>
<sequence length="547" mass="62548">MAVISLLFLAVMYVVHHPLMVSDRMDLDTLARSRQLEKRMSEEMRQLEIEFEERSRAAEEKQKAENFWRGDTSNDQLVLGKKDMRWPFQASGQDGGPLGWMLGNLWNAGLFCLFLIFELLRQNMQHEPAFESSSEEEEEEIRVVPVSSYTWLSGFPSQEALESFYKHYIQNAIRDLPCTCEFVESFVDDLIEACRVLSRREAHPQLEDCLGIGAAFEKWGTLHETQKFDVLVPIVPPQGTMFILEMRDPTLGRRCGCVKVDSECVCKNEKLLGDVLCLVHHRDHSAMLSKCTSSIKAALCTSSHLDVYKTVQWFRNMVSNAWALVAHKYDFKLTLPPSTTTCKLRLDYRSGRSLSISLVLGVQREDTLVYLVSQAPEREQFTSVDWPESFAACEHLFLKLVGRFAPDNTCHLKCLQIILSLQDHQTLPPGASRPILTSYHFKTALMHLLLRLPLTDWQHRMLSQRLQDLLWFLGRSLQQRSLHHFLIGNTHLPLTIPIPKAFRNAEPVNLFQHLVLNPVAHSQAVEEFHNLLAQVKTLPCSPLAGGL</sequence>
<comment type="function">
    <text evidence="1">Functions as a ligand of CD3E, inhibiting TCR-CD3 complex signaling to regulate T cell activation. Induces stable CD3E-NCK1 binding, thereby preventing the CD3E-ZAP70 interaction and subsequently inhibiting the activation of the downstream ERK-NFkB signaling cascade and calcium influx.</text>
</comment>
<comment type="subcellular location">
    <subcellularLocation>
        <location evidence="1">Cell membrane</location>
        <topology evidence="2">Single-pass type I membrane protein</topology>
    </subcellularLocation>
</comment>
<comment type="similarity">
    <text evidence="3">Belongs to the ITPRIP family.</text>
</comment>
<name>IPIL1_RAT</name>
<evidence type="ECO:0000250" key="1">
    <source>
        <dbReference type="UniProtKB" id="Q6GPH6"/>
    </source>
</evidence>
<evidence type="ECO:0000255" key="2"/>
<evidence type="ECO:0000305" key="3"/>
<protein>
    <recommendedName>
        <fullName>Inositol 1,4,5-trisphosphate receptor-interacting protein-like 1</fullName>
    </recommendedName>
</protein>
<reference key="1">
    <citation type="journal article" date="2004" name="Genome Res.">
        <title>The status, quality, and expansion of the NIH full-length cDNA project: the Mammalian Gene Collection (MGC).</title>
        <authorList>
            <consortium name="The MGC Project Team"/>
        </authorList>
    </citation>
    <scope>NUCLEOTIDE SEQUENCE [LARGE SCALE MRNA]</scope>
    <source>
        <tissue>Testis</tissue>
    </source>
</reference>